<proteinExistence type="inferred from homology"/>
<dbReference type="EMBL" id="CP000686">
    <property type="protein sequence ID" value="ABQ90402.1"/>
    <property type="molecule type" value="Genomic_DNA"/>
</dbReference>
<dbReference type="RefSeq" id="WP_011956748.1">
    <property type="nucleotide sequence ID" value="NC_009523.1"/>
</dbReference>
<dbReference type="SMR" id="A5UUU9"/>
<dbReference type="STRING" id="357808.RoseRS_2016"/>
<dbReference type="KEGG" id="rrs:RoseRS_2016"/>
<dbReference type="eggNOG" id="COG0233">
    <property type="taxonomic scope" value="Bacteria"/>
</dbReference>
<dbReference type="HOGENOM" id="CLU_073981_2_0_0"/>
<dbReference type="OrthoDB" id="9804006at2"/>
<dbReference type="Proteomes" id="UP000006554">
    <property type="component" value="Chromosome"/>
</dbReference>
<dbReference type="GO" id="GO:0005737">
    <property type="term" value="C:cytoplasm"/>
    <property type="evidence" value="ECO:0007669"/>
    <property type="project" value="UniProtKB-SubCell"/>
</dbReference>
<dbReference type="GO" id="GO:0043023">
    <property type="term" value="F:ribosomal large subunit binding"/>
    <property type="evidence" value="ECO:0007669"/>
    <property type="project" value="TreeGrafter"/>
</dbReference>
<dbReference type="GO" id="GO:0006415">
    <property type="term" value="P:translational termination"/>
    <property type="evidence" value="ECO:0007669"/>
    <property type="project" value="UniProtKB-UniRule"/>
</dbReference>
<dbReference type="CDD" id="cd00520">
    <property type="entry name" value="RRF"/>
    <property type="match status" value="1"/>
</dbReference>
<dbReference type="FunFam" id="1.10.132.20:FF:000001">
    <property type="entry name" value="Ribosome-recycling factor"/>
    <property type="match status" value="1"/>
</dbReference>
<dbReference type="FunFam" id="3.30.1360.40:FF:000001">
    <property type="entry name" value="Ribosome-recycling factor"/>
    <property type="match status" value="1"/>
</dbReference>
<dbReference type="Gene3D" id="3.30.1360.40">
    <property type="match status" value="1"/>
</dbReference>
<dbReference type="Gene3D" id="1.10.132.20">
    <property type="entry name" value="Ribosome-recycling factor"/>
    <property type="match status" value="1"/>
</dbReference>
<dbReference type="HAMAP" id="MF_00040">
    <property type="entry name" value="RRF"/>
    <property type="match status" value="1"/>
</dbReference>
<dbReference type="InterPro" id="IPR002661">
    <property type="entry name" value="Ribosome_recyc_fac"/>
</dbReference>
<dbReference type="InterPro" id="IPR023584">
    <property type="entry name" value="Ribosome_recyc_fac_dom"/>
</dbReference>
<dbReference type="InterPro" id="IPR036191">
    <property type="entry name" value="RRF_sf"/>
</dbReference>
<dbReference type="NCBIfam" id="TIGR00496">
    <property type="entry name" value="frr"/>
    <property type="match status" value="1"/>
</dbReference>
<dbReference type="PANTHER" id="PTHR20982:SF3">
    <property type="entry name" value="MITOCHONDRIAL RIBOSOME RECYCLING FACTOR PSEUDO 1"/>
    <property type="match status" value="1"/>
</dbReference>
<dbReference type="PANTHER" id="PTHR20982">
    <property type="entry name" value="RIBOSOME RECYCLING FACTOR"/>
    <property type="match status" value="1"/>
</dbReference>
<dbReference type="Pfam" id="PF01765">
    <property type="entry name" value="RRF"/>
    <property type="match status" value="1"/>
</dbReference>
<dbReference type="SUPFAM" id="SSF55194">
    <property type="entry name" value="Ribosome recycling factor, RRF"/>
    <property type="match status" value="1"/>
</dbReference>
<sequence length="185" mass="21064">MVNDVLREAESRMKKATEALRNHLATIRTGRASPALVEHLHVEAYGATLPLNQLATITVPEPRLLVIQPFDANTVKAISKAIMNSELGITPTDDGRVIRLAIPQLTEARRKELTKLVRARVEESKIALRNIRREALEDLRDLEHEKMISEDEHRRAQEKLQELTDRFVRELDHIGATKEAEVMEI</sequence>
<accession>A5UUU9</accession>
<name>RRF_ROSS1</name>
<keyword id="KW-0963">Cytoplasm</keyword>
<keyword id="KW-0648">Protein biosynthesis</keyword>
<gene>
    <name evidence="1" type="primary">frr</name>
    <name type="ordered locus">RoseRS_2016</name>
</gene>
<comment type="function">
    <text evidence="1">Responsible for the release of ribosomes from messenger RNA at the termination of protein biosynthesis. May increase the efficiency of translation by recycling ribosomes from one round of translation to another.</text>
</comment>
<comment type="subcellular location">
    <subcellularLocation>
        <location evidence="1">Cytoplasm</location>
    </subcellularLocation>
</comment>
<comment type="similarity">
    <text evidence="1">Belongs to the RRF family.</text>
</comment>
<reference key="1">
    <citation type="submission" date="2007-04" db="EMBL/GenBank/DDBJ databases">
        <title>Complete sequence of Roseiflexus sp. RS-1.</title>
        <authorList>
            <consortium name="US DOE Joint Genome Institute"/>
            <person name="Copeland A."/>
            <person name="Lucas S."/>
            <person name="Lapidus A."/>
            <person name="Barry K."/>
            <person name="Detter J.C."/>
            <person name="Glavina del Rio T."/>
            <person name="Hammon N."/>
            <person name="Israni S."/>
            <person name="Dalin E."/>
            <person name="Tice H."/>
            <person name="Pitluck S."/>
            <person name="Chertkov O."/>
            <person name="Brettin T."/>
            <person name="Bruce D."/>
            <person name="Han C."/>
            <person name="Schmutz J."/>
            <person name="Larimer F."/>
            <person name="Land M."/>
            <person name="Hauser L."/>
            <person name="Kyrpides N."/>
            <person name="Mikhailova N."/>
            <person name="Bryant D.A."/>
            <person name="Richardson P."/>
        </authorList>
    </citation>
    <scope>NUCLEOTIDE SEQUENCE [LARGE SCALE GENOMIC DNA]</scope>
    <source>
        <strain>RS-1</strain>
    </source>
</reference>
<feature type="chain" id="PRO_1000003252" description="Ribosome-recycling factor">
    <location>
        <begin position="1"/>
        <end position="185"/>
    </location>
</feature>
<organism>
    <name type="scientific">Roseiflexus sp. (strain RS-1)</name>
    <dbReference type="NCBI Taxonomy" id="357808"/>
    <lineage>
        <taxon>Bacteria</taxon>
        <taxon>Bacillati</taxon>
        <taxon>Chloroflexota</taxon>
        <taxon>Chloroflexia</taxon>
        <taxon>Chloroflexales</taxon>
        <taxon>Roseiflexineae</taxon>
        <taxon>Roseiflexaceae</taxon>
        <taxon>Roseiflexus</taxon>
    </lineage>
</organism>
<protein>
    <recommendedName>
        <fullName evidence="1">Ribosome-recycling factor</fullName>
        <shortName evidence="1">RRF</shortName>
    </recommendedName>
    <alternativeName>
        <fullName evidence="1">Ribosome-releasing factor</fullName>
    </alternativeName>
</protein>
<evidence type="ECO:0000255" key="1">
    <source>
        <dbReference type="HAMAP-Rule" id="MF_00040"/>
    </source>
</evidence>